<accession>Q6FSD5</accession>
<dbReference type="EMBL" id="CR380954">
    <property type="protein sequence ID" value="CAG59792.1"/>
    <property type="molecule type" value="Genomic_DNA"/>
</dbReference>
<dbReference type="RefSeq" id="XP_446859.1">
    <property type="nucleotide sequence ID" value="XM_446859.1"/>
</dbReference>
<dbReference type="SMR" id="Q6FSD5"/>
<dbReference type="FunCoup" id="Q6FSD5">
    <property type="interactions" value="766"/>
</dbReference>
<dbReference type="STRING" id="284593.Q6FSD5"/>
<dbReference type="EnsemblFungi" id="CAGL0H01397g-T">
    <property type="protein sequence ID" value="CAGL0H01397g-T-p1"/>
    <property type="gene ID" value="CAGL0H01397g"/>
</dbReference>
<dbReference type="KEGG" id="cgr:2888603"/>
<dbReference type="CGD" id="CAL0131794">
    <property type="gene designation" value="CAGL0H01397g"/>
</dbReference>
<dbReference type="VEuPathDB" id="FungiDB:B1J91_H01397g"/>
<dbReference type="VEuPathDB" id="FungiDB:CAGL0H01397g"/>
<dbReference type="eggNOG" id="KOG1662">
    <property type="taxonomic scope" value="Eukaryota"/>
</dbReference>
<dbReference type="HOGENOM" id="CLU_085114_0_0_1"/>
<dbReference type="InParanoid" id="Q6FSD5"/>
<dbReference type="OMA" id="MVDNIQD"/>
<dbReference type="Proteomes" id="UP000002428">
    <property type="component" value="Chromosome H"/>
</dbReference>
<dbReference type="GO" id="GO:0005743">
    <property type="term" value="C:mitochondrial inner membrane"/>
    <property type="evidence" value="ECO:0007669"/>
    <property type="project" value="UniProtKB-SubCell"/>
</dbReference>
<dbReference type="GO" id="GO:0045259">
    <property type="term" value="C:proton-transporting ATP synthase complex"/>
    <property type="evidence" value="ECO:0007669"/>
    <property type="project" value="EnsemblFungi"/>
</dbReference>
<dbReference type="GO" id="GO:0046933">
    <property type="term" value="F:proton-transporting ATP synthase activity, rotational mechanism"/>
    <property type="evidence" value="ECO:0007669"/>
    <property type="project" value="EnsemblFungi"/>
</dbReference>
<dbReference type="Gene3D" id="1.10.520.20">
    <property type="entry name" value="N-terminal domain of the delta subunit of the F1F0-ATP synthase"/>
    <property type="match status" value="1"/>
</dbReference>
<dbReference type="HAMAP" id="MF_01416">
    <property type="entry name" value="ATP_synth_delta_bact"/>
    <property type="match status" value="1"/>
</dbReference>
<dbReference type="InterPro" id="IPR026015">
    <property type="entry name" value="ATP_synth_OSCP/delta_N_sf"/>
</dbReference>
<dbReference type="InterPro" id="IPR020781">
    <property type="entry name" value="ATPase_OSCP/d_CS"/>
</dbReference>
<dbReference type="InterPro" id="IPR000711">
    <property type="entry name" value="ATPase_OSCP/dsu"/>
</dbReference>
<dbReference type="NCBIfam" id="TIGR01145">
    <property type="entry name" value="ATP_synt_delta"/>
    <property type="match status" value="1"/>
</dbReference>
<dbReference type="PANTHER" id="PTHR11910">
    <property type="entry name" value="ATP SYNTHASE DELTA CHAIN"/>
    <property type="match status" value="1"/>
</dbReference>
<dbReference type="Pfam" id="PF00213">
    <property type="entry name" value="OSCP"/>
    <property type="match status" value="1"/>
</dbReference>
<dbReference type="PRINTS" id="PR00125">
    <property type="entry name" value="ATPASEDELTA"/>
</dbReference>
<dbReference type="SUPFAM" id="SSF47928">
    <property type="entry name" value="N-terminal domain of the delta subunit of the F1F0-ATP synthase"/>
    <property type="match status" value="1"/>
</dbReference>
<dbReference type="PROSITE" id="PS00389">
    <property type="entry name" value="ATPASE_DELTA"/>
    <property type="match status" value="1"/>
</dbReference>
<keyword id="KW-0066">ATP synthesis</keyword>
<keyword id="KW-0375">Hydrogen ion transport</keyword>
<keyword id="KW-0406">Ion transport</keyword>
<keyword id="KW-0472">Membrane</keyword>
<keyword id="KW-0496">Mitochondrion</keyword>
<keyword id="KW-0999">Mitochondrion inner membrane</keyword>
<keyword id="KW-1185">Reference proteome</keyword>
<keyword id="KW-0809">Transit peptide</keyword>
<keyword id="KW-0813">Transport</keyword>
<comment type="function">
    <text evidence="1">Mitochondrial membrane ATP synthase (F(1)F(0) ATP synthase or Complex V) produces ATP from ADP in the presence of a proton gradient across the membrane which is generated by electron transport complexes of the respiratory chain. F-type ATPases consist of two structural domains, F(1) - containing the extramembraneous catalytic core and F(0) - containing the membrane proton channel, linked together by a central stalk and a peripheral stalk. During catalysis, ATP synthesis in the catalytic domain of F(1) is coupled via a rotary mechanism of the central stalk subunits to proton translocation. Part of the complex F(0) domain and the peripheric stalk, which acts as a stator to hold the catalytic alpha(3)beta(3) subcomplex and subunit a/ATP6 static relative to the rotary elements (By similarity).</text>
</comment>
<comment type="subunit">
    <text evidence="1">F-type ATPases have 2 components, CF(1) - the catalytic core - and CF(0) - the membrane proton channel. CF(1) has five subunits: alpha(3), beta(3), gamma(1), delta(1), epsilon(1). CF(0) has three main subunits: a, b and c (By similarity).</text>
</comment>
<comment type="subcellular location">
    <subcellularLocation>
        <location>Mitochondrion</location>
    </subcellularLocation>
    <subcellularLocation>
        <location>Mitochondrion inner membrane</location>
    </subcellularLocation>
</comment>
<comment type="similarity">
    <text evidence="3">Belongs to the ATPase delta chain family.</text>
</comment>
<feature type="transit peptide" description="Mitochondrion" evidence="2">
    <location>
        <begin position="1"/>
        <end status="unknown"/>
    </location>
</feature>
<feature type="chain" id="PRO_0000002652" description="ATP synthase subunit 5, mitochondrial">
    <location>
        <begin status="unknown"/>
        <end position="207"/>
    </location>
</feature>
<proteinExistence type="inferred from homology"/>
<name>ATPO_CANGA</name>
<evidence type="ECO:0000250" key="1"/>
<evidence type="ECO:0000255" key="2"/>
<evidence type="ECO:0000305" key="3"/>
<protein>
    <recommendedName>
        <fullName>ATP synthase subunit 5, mitochondrial</fullName>
        <shortName>ATP synthase chain 5</shortName>
    </recommendedName>
    <alternativeName>
        <fullName>Oligomycin sensitivity conferral protein</fullName>
        <shortName>OSCP</shortName>
    </alternativeName>
</protein>
<reference key="1">
    <citation type="journal article" date="2004" name="Nature">
        <title>Genome evolution in yeasts.</title>
        <authorList>
            <person name="Dujon B."/>
            <person name="Sherman D."/>
            <person name="Fischer G."/>
            <person name="Durrens P."/>
            <person name="Casaregola S."/>
            <person name="Lafontaine I."/>
            <person name="de Montigny J."/>
            <person name="Marck C."/>
            <person name="Neuveglise C."/>
            <person name="Talla E."/>
            <person name="Goffard N."/>
            <person name="Frangeul L."/>
            <person name="Aigle M."/>
            <person name="Anthouard V."/>
            <person name="Babour A."/>
            <person name="Barbe V."/>
            <person name="Barnay S."/>
            <person name="Blanchin S."/>
            <person name="Beckerich J.-M."/>
            <person name="Beyne E."/>
            <person name="Bleykasten C."/>
            <person name="Boisrame A."/>
            <person name="Boyer J."/>
            <person name="Cattolico L."/>
            <person name="Confanioleri F."/>
            <person name="de Daruvar A."/>
            <person name="Despons L."/>
            <person name="Fabre E."/>
            <person name="Fairhead C."/>
            <person name="Ferry-Dumazet H."/>
            <person name="Groppi A."/>
            <person name="Hantraye F."/>
            <person name="Hennequin C."/>
            <person name="Jauniaux N."/>
            <person name="Joyet P."/>
            <person name="Kachouri R."/>
            <person name="Kerrest A."/>
            <person name="Koszul R."/>
            <person name="Lemaire M."/>
            <person name="Lesur I."/>
            <person name="Ma L."/>
            <person name="Muller H."/>
            <person name="Nicaud J.-M."/>
            <person name="Nikolski M."/>
            <person name="Oztas S."/>
            <person name="Ozier-Kalogeropoulos O."/>
            <person name="Pellenz S."/>
            <person name="Potier S."/>
            <person name="Richard G.-F."/>
            <person name="Straub M.-L."/>
            <person name="Suleau A."/>
            <person name="Swennen D."/>
            <person name="Tekaia F."/>
            <person name="Wesolowski-Louvel M."/>
            <person name="Westhof E."/>
            <person name="Wirth B."/>
            <person name="Zeniou-Meyer M."/>
            <person name="Zivanovic Y."/>
            <person name="Bolotin-Fukuhara M."/>
            <person name="Thierry A."/>
            <person name="Bouchier C."/>
            <person name="Caudron B."/>
            <person name="Scarpelli C."/>
            <person name="Gaillardin C."/>
            <person name="Weissenbach J."/>
            <person name="Wincker P."/>
            <person name="Souciet J.-L."/>
        </authorList>
    </citation>
    <scope>NUCLEOTIDE SEQUENCE [LARGE SCALE GENOMIC DNA]</scope>
    <source>
        <strain>ATCC 2001 / BCRC 20586 / JCM 3761 / NBRC 0622 / NRRL Y-65 / CBS 138</strain>
    </source>
</reference>
<organism>
    <name type="scientific">Candida glabrata (strain ATCC 2001 / BCRC 20586 / JCM 3761 / NBRC 0622 / NRRL Y-65 / CBS 138)</name>
    <name type="common">Yeast</name>
    <name type="synonym">Nakaseomyces glabratus</name>
    <dbReference type="NCBI Taxonomy" id="284593"/>
    <lineage>
        <taxon>Eukaryota</taxon>
        <taxon>Fungi</taxon>
        <taxon>Dikarya</taxon>
        <taxon>Ascomycota</taxon>
        <taxon>Saccharomycotina</taxon>
        <taxon>Saccharomycetes</taxon>
        <taxon>Saccharomycetales</taxon>
        <taxon>Saccharomycetaceae</taxon>
        <taxon>Nakaseomyces</taxon>
    </lineage>
</organism>
<gene>
    <name type="primary">ATP5</name>
    <name type="ordered locus">CAGL0H01397g</name>
</gene>
<sequence>MFSRVFVRAASNAAKAGVKPPVKLFGVEGTYASALFTAASKETSVESASSSLVKLSSLIKEDAKLKHIMENPALSTKDRAVVVDSLVKSSANLDKPVVNLLKVLAENNKLGLFDKISSQFSILNDAHNGLIRGSVTTAQPLDSKNFKRLEKALQQSSLVGQQKTLKLDNVVKPDIKGGLIVEVGDQTIDLSVSSKIQKLNKVLEETI</sequence>